<comment type="function">
    <text evidence="1">Catalyzes the NAD-dependent conversion of D-erythrose 4-phosphate to 4-phosphoerythronate.</text>
</comment>
<comment type="catalytic activity">
    <reaction evidence="1">
        <text>D-erythrose 4-phosphate + NAD(+) + H2O = 4-phospho-D-erythronate + NADH + 2 H(+)</text>
        <dbReference type="Rhea" id="RHEA:12056"/>
        <dbReference type="ChEBI" id="CHEBI:15377"/>
        <dbReference type="ChEBI" id="CHEBI:15378"/>
        <dbReference type="ChEBI" id="CHEBI:16897"/>
        <dbReference type="ChEBI" id="CHEBI:57540"/>
        <dbReference type="ChEBI" id="CHEBI:57945"/>
        <dbReference type="ChEBI" id="CHEBI:58766"/>
        <dbReference type="EC" id="1.2.1.72"/>
    </reaction>
</comment>
<comment type="pathway">
    <text evidence="1">Cofactor biosynthesis; pyridoxine 5'-phosphate biosynthesis; pyridoxine 5'-phosphate from D-erythrose 4-phosphate: step 1/5.</text>
</comment>
<comment type="subunit">
    <text evidence="1">Homotetramer.</text>
</comment>
<comment type="subcellular location">
    <subcellularLocation>
        <location evidence="1">Cytoplasm</location>
    </subcellularLocation>
</comment>
<comment type="similarity">
    <text evidence="1">Belongs to the glyceraldehyde-3-phosphate dehydrogenase family. Epd subfamily.</text>
</comment>
<feature type="chain" id="PRO_0000293178" description="D-erythrose-4-phosphate dehydrogenase">
    <location>
        <begin position="1"/>
        <end position="338"/>
    </location>
</feature>
<feature type="active site" description="Nucleophile" evidence="1">
    <location>
        <position position="155"/>
    </location>
</feature>
<feature type="binding site" evidence="1">
    <location>
        <begin position="12"/>
        <end position="13"/>
    </location>
    <ligand>
        <name>NAD(+)</name>
        <dbReference type="ChEBI" id="CHEBI:57540"/>
    </ligand>
</feature>
<feature type="binding site" evidence="1">
    <location>
        <begin position="154"/>
        <end position="156"/>
    </location>
    <ligand>
        <name>substrate</name>
    </ligand>
</feature>
<feature type="binding site" evidence="1">
    <location>
        <position position="200"/>
    </location>
    <ligand>
        <name>substrate</name>
    </ligand>
</feature>
<feature type="binding site" evidence="1">
    <location>
        <begin position="213"/>
        <end position="214"/>
    </location>
    <ligand>
        <name>substrate</name>
    </ligand>
</feature>
<feature type="binding site" evidence="1">
    <location>
        <position position="236"/>
    </location>
    <ligand>
        <name>substrate</name>
    </ligand>
</feature>
<feature type="binding site" evidence="1">
    <location>
        <position position="318"/>
    </location>
    <ligand>
        <name>NAD(+)</name>
        <dbReference type="ChEBI" id="CHEBI:57540"/>
    </ligand>
</feature>
<feature type="site" description="Activates thiol group during catalysis" evidence="1">
    <location>
        <position position="182"/>
    </location>
</feature>
<dbReference type="EC" id="1.2.1.72" evidence="1"/>
<dbReference type="EMBL" id="AM286415">
    <property type="protein sequence ID" value="CAL13439.1"/>
    <property type="molecule type" value="Genomic_DNA"/>
</dbReference>
<dbReference type="RefSeq" id="WP_011817037.1">
    <property type="nucleotide sequence ID" value="NC_008800.1"/>
</dbReference>
<dbReference type="RefSeq" id="YP_001007581.1">
    <property type="nucleotide sequence ID" value="NC_008800.1"/>
</dbReference>
<dbReference type="SMR" id="A1JPR1"/>
<dbReference type="KEGG" id="yen:YE3415"/>
<dbReference type="PATRIC" id="fig|393305.7.peg.3626"/>
<dbReference type="eggNOG" id="COG0057">
    <property type="taxonomic scope" value="Bacteria"/>
</dbReference>
<dbReference type="HOGENOM" id="CLU_030140_0_2_6"/>
<dbReference type="OrthoDB" id="9803304at2"/>
<dbReference type="UniPathway" id="UPA00244">
    <property type="reaction ID" value="UER00309"/>
</dbReference>
<dbReference type="Proteomes" id="UP000000642">
    <property type="component" value="Chromosome"/>
</dbReference>
<dbReference type="GO" id="GO:0005737">
    <property type="term" value="C:cytoplasm"/>
    <property type="evidence" value="ECO:0007669"/>
    <property type="project" value="UniProtKB-SubCell"/>
</dbReference>
<dbReference type="GO" id="GO:0048001">
    <property type="term" value="F:erythrose-4-phosphate dehydrogenase activity"/>
    <property type="evidence" value="ECO:0007669"/>
    <property type="project" value="UniProtKB-UniRule"/>
</dbReference>
<dbReference type="GO" id="GO:0051287">
    <property type="term" value="F:NAD binding"/>
    <property type="evidence" value="ECO:0007669"/>
    <property type="project" value="InterPro"/>
</dbReference>
<dbReference type="GO" id="GO:0042823">
    <property type="term" value="P:pyridoxal phosphate biosynthetic process"/>
    <property type="evidence" value="ECO:0007669"/>
    <property type="project" value="UniProtKB-UniRule"/>
</dbReference>
<dbReference type="GO" id="GO:0008615">
    <property type="term" value="P:pyridoxine biosynthetic process"/>
    <property type="evidence" value="ECO:0007669"/>
    <property type="project" value="UniProtKB-UniRule"/>
</dbReference>
<dbReference type="CDD" id="cd23937">
    <property type="entry name" value="GAPDH_C_E4PDH"/>
    <property type="match status" value="1"/>
</dbReference>
<dbReference type="CDD" id="cd17892">
    <property type="entry name" value="GAPDH_N_E4PDH"/>
    <property type="match status" value="1"/>
</dbReference>
<dbReference type="FunFam" id="3.30.360.10:FF:000007">
    <property type="entry name" value="D-erythrose-4-phosphate dehydrogenase"/>
    <property type="match status" value="1"/>
</dbReference>
<dbReference type="FunFam" id="3.40.50.720:FF:000001">
    <property type="entry name" value="Glyceraldehyde-3-phosphate dehydrogenase"/>
    <property type="match status" value="1"/>
</dbReference>
<dbReference type="Gene3D" id="3.30.360.10">
    <property type="entry name" value="Dihydrodipicolinate Reductase, domain 2"/>
    <property type="match status" value="1"/>
</dbReference>
<dbReference type="Gene3D" id="3.40.50.720">
    <property type="entry name" value="NAD(P)-binding Rossmann-like Domain"/>
    <property type="match status" value="1"/>
</dbReference>
<dbReference type="HAMAP" id="MF_01640">
    <property type="entry name" value="E4P_dehydrog"/>
    <property type="match status" value="1"/>
</dbReference>
<dbReference type="InterPro" id="IPR006422">
    <property type="entry name" value="E4P_DH_bac"/>
</dbReference>
<dbReference type="InterPro" id="IPR020831">
    <property type="entry name" value="GlycerAld/Erythrose_P_DH"/>
</dbReference>
<dbReference type="InterPro" id="IPR020830">
    <property type="entry name" value="GlycerAld_3-P_DH_AS"/>
</dbReference>
<dbReference type="InterPro" id="IPR020829">
    <property type="entry name" value="GlycerAld_3-P_DH_cat"/>
</dbReference>
<dbReference type="InterPro" id="IPR020828">
    <property type="entry name" value="GlycerAld_3-P_DH_NAD(P)-bd"/>
</dbReference>
<dbReference type="InterPro" id="IPR036291">
    <property type="entry name" value="NAD(P)-bd_dom_sf"/>
</dbReference>
<dbReference type="NCBIfam" id="TIGR01532">
    <property type="entry name" value="E4PD_g-proteo"/>
    <property type="match status" value="1"/>
</dbReference>
<dbReference type="NCBIfam" id="NF010058">
    <property type="entry name" value="PRK13535.1"/>
    <property type="match status" value="1"/>
</dbReference>
<dbReference type="PANTHER" id="PTHR43148">
    <property type="entry name" value="GLYCERALDEHYDE-3-PHOSPHATE DEHYDROGENASE 2"/>
    <property type="match status" value="1"/>
</dbReference>
<dbReference type="Pfam" id="PF02800">
    <property type="entry name" value="Gp_dh_C"/>
    <property type="match status" value="1"/>
</dbReference>
<dbReference type="Pfam" id="PF00044">
    <property type="entry name" value="Gp_dh_N"/>
    <property type="match status" value="1"/>
</dbReference>
<dbReference type="PIRSF" id="PIRSF000149">
    <property type="entry name" value="GAP_DH"/>
    <property type="match status" value="1"/>
</dbReference>
<dbReference type="PRINTS" id="PR00078">
    <property type="entry name" value="G3PDHDRGNASE"/>
</dbReference>
<dbReference type="SMART" id="SM00846">
    <property type="entry name" value="Gp_dh_N"/>
    <property type="match status" value="1"/>
</dbReference>
<dbReference type="SUPFAM" id="SSF55347">
    <property type="entry name" value="Glyceraldehyde-3-phosphate dehydrogenase-like, C-terminal domain"/>
    <property type="match status" value="1"/>
</dbReference>
<dbReference type="SUPFAM" id="SSF51735">
    <property type="entry name" value="NAD(P)-binding Rossmann-fold domains"/>
    <property type="match status" value="1"/>
</dbReference>
<dbReference type="PROSITE" id="PS00071">
    <property type="entry name" value="GAPDH"/>
    <property type="match status" value="1"/>
</dbReference>
<keyword id="KW-0963">Cytoplasm</keyword>
<keyword id="KW-0520">NAD</keyword>
<keyword id="KW-0560">Oxidoreductase</keyword>
<keyword id="KW-0664">Pyridoxine biosynthesis</keyword>
<name>E4PD_YERE8</name>
<accession>A1JPR1</accession>
<evidence type="ECO:0000255" key="1">
    <source>
        <dbReference type="HAMAP-Rule" id="MF_01640"/>
    </source>
</evidence>
<organism>
    <name type="scientific">Yersinia enterocolitica serotype O:8 / biotype 1B (strain NCTC 13174 / 8081)</name>
    <dbReference type="NCBI Taxonomy" id="393305"/>
    <lineage>
        <taxon>Bacteria</taxon>
        <taxon>Pseudomonadati</taxon>
        <taxon>Pseudomonadota</taxon>
        <taxon>Gammaproteobacteria</taxon>
        <taxon>Enterobacterales</taxon>
        <taxon>Yersiniaceae</taxon>
        <taxon>Yersinia</taxon>
    </lineage>
</organism>
<proteinExistence type="inferred from homology"/>
<reference key="1">
    <citation type="journal article" date="2006" name="PLoS Genet.">
        <title>The complete genome sequence and comparative genome analysis of the high pathogenicity Yersinia enterocolitica strain 8081.</title>
        <authorList>
            <person name="Thomson N.R."/>
            <person name="Howard S."/>
            <person name="Wren B.W."/>
            <person name="Holden M.T.G."/>
            <person name="Crossman L."/>
            <person name="Challis G.L."/>
            <person name="Churcher C."/>
            <person name="Mungall K."/>
            <person name="Brooks K."/>
            <person name="Chillingworth T."/>
            <person name="Feltwell T."/>
            <person name="Abdellah Z."/>
            <person name="Hauser H."/>
            <person name="Jagels K."/>
            <person name="Maddison M."/>
            <person name="Moule S."/>
            <person name="Sanders M."/>
            <person name="Whitehead S."/>
            <person name="Quail M.A."/>
            <person name="Dougan G."/>
            <person name="Parkhill J."/>
            <person name="Prentice M.B."/>
        </authorList>
    </citation>
    <scope>NUCLEOTIDE SEQUENCE [LARGE SCALE GENOMIC DNA]</scope>
    <source>
        <strain>NCTC 13174 / 8081</strain>
    </source>
</reference>
<gene>
    <name evidence="1" type="primary">epd</name>
    <name type="ordered locus">YE3415</name>
</gene>
<sequence>MTIRIAINGFGRIGRSVLRALYESGRRAEISVVAINELANAEGMAHLLKYDSSHGRFAWDVRQECDKLYVGDDIIRLIHQPEIEQLPWGELGIDVVLDCSGVYGSRADGEAHLTSGAKKVLFAHPGGHDLDATVVYGVNHQDLQADHRIVSNASCTTNCIIPIIQLLDVAFGIESGTVTTIHSSMNDQPVIDAYHQDLRRTRAASQSIIPVDTKLAAGITRIFPKFCDRFEAISVRVPTINVTAIDLSVSVTSPVDVAEVNQLLQKAARGSFRGIVDYTELPLVSTDFNHDPHSAIVDCTQTRVSGQHLIKTLVWCDNEWGFANRMLDTTLAMARSGF</sequence>
<protein>
    <recommendedName>
        <fullName evidence="1">D-erythrose-4-phosphate dehydrogenase</fullName>
        <shortName evidence="1">E4PDH</shortName>
        <ecNumber evidence="1">1.2.1.72</ecNumber>
    </recommendedName>
</protein>